<protein>
    <recommendedName>
        <fullName evidence="3">L-malyl-CoA/beta-methylmalyl-CoA lyase</fullName>
        <ecNumber>4.1.3.24</ecNumber>
    </recommendedName>
    <alternativeName>
        <fullName evidence="3">(3S)-malyl-CoA/beta-methylmalyl-CoA lyase</fullName>
    </alternativeName>
</protein>
<proteinExistence type="inferred from homology"/>
<gene>
    <name evidence="3" type="primary">mcl1</name>
    <name type="ordered locus">RSKD131_0071</name>
</gene>
<reference evidence="6" key="1">
    <citation type="journal article" date="2009" name="J. Bacteriol.">
        <title>Complete genome sequence of Rhodobacter sphaeroides KD131.</title>
        <authorList>
            <person name="Lim S.-K."/>
            <person name="Kim S.J."/>
            <person name="Cha S.H."/>
            <person name="Oh Y.-K."/>
            <person name="Rhee H.-J."/>
            <person name="Kim M.-S."/>
            <person name="Lee J.K."/>
        </authorList>
    </citation>
    <scope>NUCLEOTIDE SEQUENCE [LARGE SCALE GENOMIC DNA]</scope>
    <source>
        <strain>KD131 / KCTC 12085</strain>
    </source>
</reference>
<comment type="function">
    <text evidence="1">Involved in the ethylmalonyl-CoA pathway for acetate assimilation. Catalyzes the reversible condensation of glyoxylate and acetyl-CoA to L-malyl-CoA and the reversible condensation of glyoxylate and propionyl-CoA to yield beta-methylmalyl-CoA (By similarity).</text>
</comment>
<comment type="catalytic activity">
    <reaction>
        <text>(S)-malyl-CoA = glyoxylate + acetyl-CoA</text>
        <dbReference type="Rhea" id="RHEA:16629"/>
        <dbReference type="ChEBI" id="CHEBI:36655"/>
        <dbReference type="ChEBI" id="CHEBI:57288"/>
        <dbReference type="ChEBI" id="CHEBI:57317"/>
        <dbReference type="EC" id="4.1.3.24"/>
    </reaction>
</comment>
<comment type="catalytic activity">
    <reaction>
        <text>(2R,3S)-beta-methylmalyl-CoA = propanoyl-CoA + glyoxylate</text>
        <dbReference type="Rhea" id="RHEA:38259"/>
        <dbReference type="ChEBI" id="CHEBI:36655"/>
        <dbReference type="ChEBI" id="CHEBI:57392"/>
        <dbReference type="ChEBI" id="CHEBI:75634"/>
        <dbReference type="EC" id="4.1.3.24"/>
    </reaction>
</comment>
<comment type="cofactor">
    <cofactor evidence="1">
        <name>Mg(2+)</name>
        <dbReference type="ChEBI" id="CHEBI:18420"/>
    </cofactor>
    <cofactor evidence="1">
        <name>Mn(2+)</name>
        <dbReference type="ChEBI" id="CHEBI:29035"/>
    </cofactor>
    <text evidence="1">Divalent cations such as magnesium or manganese.</text>
</comment>
<comment type="subunit">
    <text evidence="1">Homohexamer. Dimer of trimers (By similarity).</text>
</comment>
<comment type="similarity">
    <text evidence="5">Belongs to the HpcH/HpaI aldolase family.</text>
</comment>
<comment type="sequence caution" evidence="5">
    <conflict type="erroneous initiation">
        <sequence resource="EMBL-CDS" id="ACL99930"/>
    </conflict>
    <text>Extended N-terminus.</text>
</comment>
<name>MCAL_CERSK</name>
<dbReference type="EC" id="4.1.3.24"/>
<dbReference type="EMBL" id="CP001150">
    <property type="protein sequence ID" value="ACL99930.1"/>
    <property type="status" value="ALT_INIT"/>
    <property type="molecule type" value="Genomic_DNA"/>
</dbReference>
<dbReference type="RefSeq" id="WP_011336971.1">
    <property type="nucleotide sequence ID" value="NC_011963.1"/>
</dbReference>
<dbReference type="SMR" id="B9KLE8"/>
<dbReference type="GeneID" id="67445557"/>
<dbReference type="KEGG" id="rsk:RSKD131_0071"/>
<dbReference type="HOGENOM" id="CLU_044864_0_1_5"/>
<dbReference type="GO" id="GO:0043959">
    <property type="term" value="F:L-erythro-3-methylmalyl-CoA lyase activity"/>
    <property type="evidence" value="ECO:0007669"/>
    <property type="project" value="RHEA"/>
</dbReference>
<dbReference type="GO" id="GO:0000287">
    <property type="term" value="F:magnesium ion binding"/>
    <property type="evidence" value="ECO:0007669"/>
    <property type="project" value="TreeGrafter"/>
</dbReference>
<dbReference type="GO" id="GO:0050083">
    <property type="term" value="F:malyl-CoA lyase activity"/>
    <property type="evidence" value="ECO:0000250"/>
    <property type="project" value="UniProtKB"/>
</dbReference>
<dbReference type="GO" id="GO:0046872">
    <property type="term" value="F:metal ion binding"/>
    <property type="evidence" value="ECO:0000250"/>
    <property type="project" value="UniProtKB"/>
</dbReference>
<dbReference type="GO" id="GO:0006107">
    <property type="term" value="P:oxaloacetate metabolic process"/>
    <property type="evidence" value="ECO:0007669"/>
    <property type="project" value="TreeGrafter"/>
</dbReference>
<dbReference type="FunFam" id="3.20.20.60:FF:000020">
    <property type="entry name" value="Malyl-CoA lyase"/>
    <property type="match status" value="1"/>
</dbReference>
<dbReference type="Gene3D" id="3.20.20.60">
    <property type="entry name" value="Phosphoenolpyruvate-binding domains"/>
    <property type="match status" value="1"/>
</dbReference>
<dbReference type="InterPro" id="IPR005000">
    <property type="entry name" value="Aldolase/citrate-lyase_domain"/>
</dbReference>
<dbReference type="InterPro" id="IPR011206">
    <property type="entry name" value="Citrate_lyase_beta/mcl1/mcl2"/>
</dbReference>
<dbReference type="InterPro" id="IPR015813">
    <property type="entry name" value="Pyrv/PenolPyrv_kinase-like_dom"/>
</dbReference>
<dbReference type="InterPro" id="IPR040442">
    <property type="entry name" value="Pyrv_kinase-like_dom_sf"/>
</dbReference>
<dbReference type="PANTHER" id="PTHR32308:SF10">
    <property type="entry name" value="CITRATE LYASE SUBUNIT BETA"/>
    <property type="match status" value="1"/>
</dbReference>
<dbReference type="PANTHER" id="PTHR32308">
    <property type="entry name" value="LYASE BETA SUBUNIT, PUTATIVE (AFU_ORTHOLOGUE AFUA_4G13030)-RELATED"/>
    <property type="match status" value="1"/>
</dbReference>
<dbReference type="Pfam" id="PF03328">
    <property type="entry name" value="HpcH_HpaI"/>
    <property type="match status" value="1"/>
</dbReference>
<dbReference type="PIRSF" id="PIRSF015582">
    <property type="entry name" value="Cit_lyase_B"/>
    <property type="match status" value="1"/>
</dbReference>
<dbReference type="SUPFAM" id="SSF51621">
    <property type="entry name" value="Phosphoenolpyruvate/pyruvate domain"/>
    <property type="match status" value="1"/>
</dbReference>
<evidence type="ECO:0000250" key="1"/>
<evidence type="ECO:0000250" key="2">
    <source>
        <dbReference type="UniProtKB" id="B6E2X2"/>
    </source>
</evidence>
<evidence type="ECO:0000250" key="3">
    <source>
        <dbReference type="UniProtKB" id="Q3J5L6"/>
    </source>
</evidence>
<evidence type="ECO:0000250" key="4">
    <source>
        <dbReference type="UniProtKB" id="Q9RUZ0"/>
    </source>
</evidence>
<evidence type="ECO:0000305" key="5"/>
<evidence type="ECO:0000312" key="6">
    <source>
        <dbReference type="EMBL" id="ACL99930.1"/>
    </source>
</evidence>
<feature type="initiator methionine" description="Removed" evidence="2">
    <location>
        <position position="1"/>
    </location>
</feature>
<feature type="chain" id="PRO_0000404704" description="L-malyl-CoA/beta-methylmalyl-CoA lyase">
    <location>
        <begin position="2"/>
        <end position="318"/>
    </location>
</feature>
<feature type="binding site" evidence="1">
    <location>
        <position position="19"/>
    </location>
    <ligand>
        <name>substrate</name>
    </ligand>
</feature>
<feature type="binding site" evidence="1">
    <location>
        <position position="24"/>
    </location>
    <ligand>
        <name>substrate</name>
    </ligand>
</feature>
<feature type="binding site" evidence="1">
    <location>
        <position position="30"/>
    </location>
    <ligand>
        <name>substrate</name>
    </ligand>
</feature>
<feature type="binding site" evidence="4">
    <location>
        <position position="76"/>
    </location>
    <ligand>
        <name>substrate</name>
    </ligand>
</feature>
<feature type="binding site" evidence="1">
    <location>
        <position position="141"/>
    </location>
    <ligand>
        <name>Mg(2+)</name>
        <dbReference type="ChEBI" id="CHEBI:18420"/>
    </ligand>
</feature>
<feature type="binding site" evidence="1">
    <location>
        <begin position="167"/>
        <end position="168"/>
    </location>
    <ligand>
        <name>substrate</name>
    </ligand>
</feature>
<feature type="binding site" evidence="1">
    <location>
        <position position="168"/>
    </location>
    <ligand>
        <name>Mg(2+)</name>
        <dbReference type="ChEBI" id="CHEBI:18420"/>
    </ligand>
</feature>
<feature type="binding site" evidence="1">
    <location>
        <begin position="251"/>
        <end position="252"/>
    </location>
    <ligand>
        <name>substrate</name>
    </ligand>
</feature>
<sequence>MSFRLQPAPPARPNRCQLFGPGSRPALFEKMAASAADVINLDLEDSVAPDDKAQARANIIEAINGLDWGRKYLSVRINGLDTPFWYRDVVDLLEQAGDRLDQIMIPKVGCAADVYAVDALVTAIERAKGRTKPLSFEVIIESAAGIAHVEEIAASSPRLQAMSLGAADFAASMGMQTTGIGGTQENYYMLHDGQKHWSDPWHWAQAAIVAACRTHGILPVDGPFGDFSDDEGFRAQARRSATLGMVGKWAIHPKQVALANEVFTPSETAVTEAREILAAMDAAKARGEGATVYKGRLVDIASIKQAEVIVRQAEMISA</sequence>
<accession>B9KLE8</accession>
<organism>
    <name type="scientific">Cereibacter sphaeroides (strain KD131 / KCTC 12085)</name>
    <name type="common">Rhodobacter sphaeroides</name>
    <dbReference type="NCBI Taxonomy" id="557760"/>
    <lineage>
        <taxon>Bacteria</taxon>
        <taxon>Pseudomonadati</taxon>
        <taxon>Pseudomonadota</taxon>
        <taxon>Alphaproteobacteria</taxon>
        <taxon>Rhodobacterales</taxon>
        <taxon>Paracoccaceae</taxon>
        <taxon>Cereibacter</taxon>
    </lineage>
</organism>
<keyword id="KW-0456">Lyase</keyword>
<keyword id="KW-0460">Magnesium</keyword>
<keyword id="KW-0464">Manganese</keyword>
<keyword id="KW-0479">Metal-binding</keyword>